<organism>
    <name type="scientific">Nicotiana tabacum</name>
    <name type="common">Common tobacco</name>
    <dbReference type="NCBI Taxonomy" id="4097"/>
    <lineage>
        <taxon>Eukaryota</taxon>
        <taxon>Viridiplantae</taxon>
        <taxon>Streptophyta</taxon>
        <taxon>Embryophyta</taxon>
        <taxon>Tracheophyta</taxon>
        <taxon>Spermatophyta</taxon>
        <taxon>Magnoliopsida</taxon>
        <taxon>eudicotyledons</taxon>
        <taxon>Gunneridae</taxon>
        <taxon>Pentapetalae</taxon>
        <taxon>asterids</taxon>
        <taxon>lamiids</taxon>
        <taxon>Solanales</taxon>
        <taxon>Solanaceae</taxon>
        <taxon>Nicotianoideae</taxon>
        <taxon>Nicotianeae</taxon>
        <taxon>Nicotiana</taxon>
    </lineage>
</organism>
<reference key="1">
    <citation type="journal article" date="1986" name="EMBO J.">
        <title>The complete nucleotide sequence of the tobacco chloroplast genome: its gene organization and expression.</title>
        <authorList>
            <person name="Shinozaki K."/>
            <person name="Ohme M."/>
            <person name="Tanaka M."/>
            <person name="Wakasugi T."/>
            <person name="Hayashida N."/>
            <person name="Matsubayashi T."/>
            <person name="Zaita N."/>
            <person name="Chunwongse J."/>
            <person name="Obokata J."/>
            <person name="Yamaguchi-Shinozaki K."/>
            <person name="Ohto C."/>
            <person name="Torazawa K."/>
            <person name="Meng B.-Y."/>
            <person name="Sugita M."/>
            <person name="Deno H."/>
            <person name="Kamogashira T."/>
            <person name="Yamada K."/>
            <person name="Kusuda J."/>
            <person name="Takaiwa F."/>
            <person name="Kato A."/>
            <person name="Tohdoh N."/>
            <person name="Shimada H."/>
            <person name="Sugiura M."/>
        </authorList>
    </citation>
    <scope>NUCLEOTIDE SEQUENCE [LARGE SCALE GENOMIC DNA]</scope>
    <source>
        <strain>cv. Bright Yellow 4</strain>
    </source>
</reference>
<name>NU6C_TOBAC</name>
<dbReference type="EC" id="7.1.1.-"/>
<dbReference type="EMBL" id="Z00044">
    <property type="protein sequence ID" value="CAA77434.1"/>
    <property type="molecule type" value="Genomic_DNA"/>
</dbReference>
<dbReference type="PIR" id="A05214">
    <property type="entry name" value="A05214"/>
</dbReference>
<dbReference type="RefSeq" id="NP_054560.1">
    <property type="nucleotide sequence ID" value="NC_001879.2"/>
</dbReference>
<dbReference type="SMR" id="Q32722"/>
<dbReference type="GeneID" id="800451"/>
<dbReference type="KEGG" id="nta:800451"/>
<dbReference type="OMA" id="TSWYGVI"/>
<dbReference type="OrthoDB" id="1893972at2759"/>
<dbReference type="Proteomes" id="UP000084051">
    <property type="component" value="Unplaced"/>
</dbReference>
<dbReference type="GO" id="GO:0009535">
    <property type="term" value="C:chloroplast thylakoid membrane"/>
    <property type="evidence" value="ECO:0007669"/>
    <property type="project" value="UniProtKB-SubCell"/>
</dbReference>
<dbReference type="GO" id="GO:0008137">
    <property type="term" value="F:NADH dehydrogenase (ubiquinone) activity"/>
    <property type="evidence" value="ECO:0007669"/>
    <property type="project" value="InterPro"/>
</dbReference>
<dbReference type="GO" id="GO:0048038">
    <property type="term" value="F:quinone binding"/>
    <property type="evidence" value="ECO:0007669"/>
    <property type="project" value="UniProtKB-KW"/>
</dbReference>
<dbReference type="FunFam" id="1.20.120.1200:FF:000002">
    <property type="entry name" value="NAD(P)H-quinone oxidoreductase subunit 6, chloroplastic"/>
    <property type="match status" value="1"/>
</dbReference>
<dbReference type="Gene3D" id="1.20.120.1200">
    <property type="entry name" value="NADH-ubiquinone/plastoquinone oxidoreductase chain 6, subunit NuoJ"/>
    <property type="match status" value="1"/>
</dbReference>
<dbReference type="InterPro" id="IPR050290">
    <property type="entry name" value="NAD(P)H-Q_Oxidoreduct_6"/>
</dbReference>
<dbReference type="InterPro" id="IPR001457">
    <property type="entry name" value="NADH_UbQ/plastoQ_OxRdtase_su6"/>
</dbReference>
<dbReference type="InterPro" id="IPR042106">
    <property type="entry name" value="Nuo/plastoQ_OxRdtase_6_NuoJ"/>
</dbReference>
<dbReference type="PANTHER" id="PTHR48479">
    <property type="entry name" value="NAD(P)H-QUINONE OXIDOREDUCTASE SUBUNIT 6, CHLOROPLASTIC"/>
    <property type="match status" value="1"/>
</dbReference>
<dbReference type="PANTHER" id="PTHR48479:SF1">
    <property type="entry name" value="NAD(P)H-QUINONE OXIDOREDUCTASE SUBUNIT 6, CHLOROPLASTIC"/>
    <property type="match status" value="1"/>
</dbReference>
<dbReference type="Pfam" id="PF00499">
    <property type="entry name" value="Oxidored_q3"/>
    <property type="match status" value="1"/>
</dbReference>
<protein>
    <recommendedName>
        <fullName>NAD(P)H-quinone oxidoreductase subunit 6, chloroplastic</fullName>
        <ecNumber>7.1.1.-</ecNumber>
    </recommendedName>
    <alternativeName>
        <fullName>NAD(P)H dehydrogenase subunit 6</fullName>
    </alternativeName>
    <alternativeName>
        <fullName>NADH-plastoquinone oxidoreductase subunit 6</fullName>
    </alternativeName>
</protein>
<keyword id="KW-0150">Chloroplast</keyword>
<keyword id="KW-0472">Membrane</keyword>
<keyword id="KW-0520">NAD</keyword>
<keyword id="KW-0521">NADP</keyword>
<keyword id="KW-0934">Plastid</keyword>
<keyword id="KW-0618">Plastoquinone</keyword>
<keyword id="KW-0874">Quinone</keyword>
<keyword id="KW-1185">Reference proteome</keyword>
<keyword id="KW-0793">Thylakoid</keyword>
<keyword id="KW-1278">Translocase</keyword>
<keyword id="KW-0812">Transmembrane</keyword>
<keyword id="KW-1133">Transmembrane helix</keyword>
<keyword id="KW-0813">Transport</keyword>
<gene>
    <name type="primary">ndhG</name>
</gene>
<feature type="chain" id="PRO_0000118363" description="NAD(P)H-quinone oxidoreductase subunit 6, chloroplastic">
    <location>
        <begin position="1"/>
        <end position="176"/>
    </location>
</feature>
<feature type="transmembrane region" description="Helical" evidence="2">
    <location>
        <begin position="10"/>
        <end position="30"/>
    </location>
</feature>
<feature type="transmembrane region" description="Helical" evidence="2">
    <location>
        <begin position="32"/>
        <end position="52"/>
    </location>
</feature>
<feature type="transmembrane region" description="Helical" evidence="2">
    <location>
        <begin position="61"/>
        <end position="81"/>
    </location>
</feature>
<feature type="transmembrane region" description="Helical" evidence="2">
    <location>
        <begin position="92"/>
        <end position="112"/>
    </location>
</feature>
<feature type="transmembrane region" description="Helical" evidence="2">
    <location>
        <begin position="152"/>
        <end position="172"/>
    </location>
</feature>
<accession>Q32722</accession>
<accession>Q32723</accession>
<proteinExistence type="inferred from homology"/>
<evidence type="ECO:0000250" key="1"/>
<evidence type="ECO:0000255" key="2"/>
<evidence type="ECO:0000305" key="3"/>
<sequence>MDLSEPIHDFLLVFLGSGLILGGLGVVLLPNPIYSAFSLGLVLVCTSLFYILSNSYFVAAAQLLIYVGAINVLIIFAVMFMNGSEYYKDFHLWTVGDGITSMVCISLFISLITTISDTSWYGIIWTTRSNQIIEQDFISNSQQIGIHLSTDFFLPFELISIILLVALIGAIAVARQ</sequence>
<geneLocation type="chloroplast"/>
<comment type="function">
    <text evidence="1">NDH shuttles electrons from NAD(P)H:plastoquinone, via FMN and iron-sulfur (Fe-S) centers, to quinones in the photosynthetic chain and possibly in a chloroplast respiratory chain. The immediate electron acceptor for the enzyme in this species is believed to be plastoquinone. Couples the redox reaction to proton translocation, and thus conserves the redox energy in a proton gradient (By similarity).</text>
</comment>
<comment type="catalytic activity">
    <reaction>
        <text>a plastoquinone + NADH + (n+1) H(+)(in) = a plastoquinol + NAD(+) + n H(+)(out)</text>
        <dbReference type="Rhea" id="RHEA:42608"/>
        <dbReference type="Rhea" id="RHEA-COMP:9561"/>
        <dbReference type="Rhea" id="RHEA-COMP:9562"/>
        <dbReference type="ChEBI" id="CHEBI:15378"/>
        <dbReference type="ChEBI" id="CHEBI:17757"/>
        <dbReference type="ChEBI" id="CHEBI:57540"/>
        <dbReference type="ChEBI" id="CHEBI:57945"/>
        <dbReference type="ChEBI" id="CHEBI:62192"/>
    </reaction>
</comment>
<comment type="catalytic activity">
    <reaction>
        <text>a plastoquinone + NADPH + (n+1) H(+)(in) = a plastoquinol + NADP(+) + n H(+)(out)</text>
        <dbReference type="Rhea" id="RHEA:42612"/>
        <dbReference type="Rhea" id="RHEA-COMP:9561"/>
        <dbReference type="Rhea" id="RHEA-COMP:9562"/>
        <dbReference type="ChEBI" id="CHEBI:15378"/>
        <dbReference type="ChEBI" id="CHEBI:17757"/>
        <dbReference type="ChEBI" id="CHEBI:57783"/>
        <dbReference type="ChEBI" id="CHEBI:58349"/>
        <dbReference type="ChEBI" id="CHEBI:62192"/>
    </reaction>
</comment>
<comment type="subunit">
    <text evidence="1">NDH is composed of at least 16 different subunits, 5 of which are encoded in the nucleus.</text>
</comment>
<comment type="subcellular location">
    <subcellularLocation>
        <location evidence="1">Plastid</location>
        <location evidence="1">Chloroplast thylakoid membrane</location>
        <topology evidence="1">Multi-pass membrane protein</topology>
    </subcellularLocation>
</comment>
<comment type="similarity">
    <text evidence="3">Belongs to the complex I subunit 6 family.</text>
</comment>